<evidence type="ECO:0000255" key="1">
    <source>
        <dbReference type="HAMAP-Rule" id="MF_01082"/>
    </source>
</evidence>
<proteinExistence type="inferred from homology"/>
<protein>
    <recommendedName>
        <fullName evidence="1">tRNA pseudouridine synthase D</fullName>
        <ecNumber evidence="1">5.4.99.27</ecNumber>
    </recommendedName>
    <alternativeName>
        <fullName evidence="1">tRNA pseudouridine(13) synthase</fullName>
    </alternativeName>
    <alternativeName>
        <fullName evidence="1">tRNA pseudouridylate synthase D</fullName>
    </alternativeName>
    <alternativeName>
        <fullName evidence="1">tRNA-uridine isomerase D</fullName>
    </alternativeName>
</protein>
<keyword id="KW-0413">Isomerase</keyword>
<keyword id="KW-1185">Reference proteome</keyword>
<keyword id="KW-0819">tRNA processing</keyword>
<feature type="chain" id="PRO_0000152492" description="tRNA pseudouridine synthase D">
    <location>
        <begin position="1"/>
        <end position="372"/>
    </location>
</feature>
<feature type="domain" description="TRUD" evidence="1">
    <location>
        <begin position="160"/>
        <end position="330"/>
    </location>
</feature>
<feature type="active site" description="Nucleophile" evidence="1">
    <location>
        <position position="85"/>
    </location>
</feature>
<comment type="function">
    <text evidence="1">Responsible for synthesis of pseudouridine from uracil-13 in transfer RNAs.</text>
</comment>
<comment type="catalytic activity">
    <reaction evidence="1">
        <text>uridine(13) in tRNA = pseudouridine(13) in tRNA</text>
        <dbReference type="Rhea" id="RHEA:42540"/>
        <dbReference type="Rhea" id="RHEA-COMP:10105"/>
        <dbReference type="Rhea" id="RHEA-COMP:10106"/>
        <dbReference type="ChEBI" id="CHEBI:65314"/>
        <dbReference type="ChEBI" id="CHEBI:65315"/>
        <dbReference type="EC" id="5.4.99.27"/>
    </reaction>
</comment>
<comment type="similarity">
    <text evidence="1">Belongs to the pseudouridine synthase TruD family.</text>
</comment>
<accession>Q9PMK3</accession>
<accession>Q0P8F8</accession>
<name>TRUD_CAMJE</name>
<reference key="1">
    <citation type="journal article" date="2000" name="Nature">
        <title>The genome sequence of the food-borne pathogen Campylobacter jejuni reveals hypervariable sequences.</title>
        <authorList>
            <person name="Parkhill J."/>
            <person name="Wren B.W."/>
            <person name="Mungall K.L."/>
            <person name="Ketley J.M."/>
            <person name="Churcher C.M."/>
            <person name="Basham D."/>
            <person name="Chillingworth T."/>
            <person name="Davies R.M."/>
            <person name="Feltwell T."/>
            <person name="Holroyd S."/>
            <person name="Jagels K."/>
            <person name="Karlyshev A.V."/>
            <person name="Moule S."/>
            <person name="Pallen M.J."/>
            <person name="Penn C.W."/>
            <person name="Quail M.A."/>
            <person name="Rajandream M.A."/>
            <person name="Rutherford K.M."/>
            <person name="van Vliet A.H.M."/>
            <person name="Whitehead S."/>
            <person name="Barrell B.G."/>
        </authorList>
    </citation>
    <scope>NUCLEOTIDE SEQUENCE [LARGE SCALE GENOMIC DNA]</scope>
    <source>
        <strain>ATCC 700819 / NCTC 11168</strain>
    </source>
</reference>
<organism>
    <name type="scientific">Campylobacter jejuni subsp. jejuni serotype O:2 (strain ATCC 700819 / NCTC 11168)</name>
    <dbReference type="NCBI Taxonomy" id="192222"/>
    <lineage>
        <taxon>Bacteria</taxon>
        <taxon>Pseudomonadati</taxon>
        <taxon>Campylobacterota</taxon>
        <taxon>Epsilonproteobacteria</taxon>
        <taxon>Campylobacterales</taxon>
        <taxon>Campylobacteraceae</taxon>
        <taxon>Campylobacter</taxon>
    </lineage>
</organism>
<dbReference type="EC" id="5.4.99.27" evidence="1"/>
<dbReference type="EMBL" id="AL111168">
    <property type="protein sequence ID" value="CAL35565.1"/>
    <property type="molecule type" value="Genomic_DNA"/>
</dbReference>
<dbReference type="PIR" id="H81291">
    <property type="entry name" value="H81291"/>
</dbReference>
<dbReference type="RefSeq" id="WP_002851259.1">
    <property type="nucleotide sequence ID" value="NZ_SZUC01000003.1"/>
</dbReference>
<dbReference type="RefSeq" id="YP_002344839.1">
    <property type="nucleotide sequence ID" value="NC_002163.1"/>
</dbReference>
<dbReference type="SMR" id="Q9PMK3"/>
<dbReference type="IntAct" id="Q9PMK3">
    <property type="interactions" value="33"/>
</dbReference>
<dbReference type="STRING" id="192222.Cj1457c"/>
<dbReference type="PaxDb" id="192222-Cj1457c"/>
<dbReference type="EnsemblBacteria" id="CAL35565">
    <property type="protein sequence ID" value="CAL35565"/>
    <property type="gene ID" value="Cj1457c"/>
</dbReference>
<dbReference type="GeneID" id="905745"/>
<dbReference type="KEGG" id="cje:Cj1457c"/>
<dbReference type="PATRIC" id="fig|192222.6.peg.1437"/>
<dbReference type="eggNOG" id="COG0585">
    <property type="taxonomic scope" value="Bacteria"/>
</dbReference>
<dbReference type="HOGENOM" id="CLU_005281_4_0_7"/>
<dbReference type="OrthoDB" id="1550679at2"/>
<dbReference type="Proteomes" id="UP000000799">
    <property type="component" value="Chromosome"/>
</dbReference>
<dbReference type="GO" id="GO:0005829">
    <property type="term" value="C:cytosol"/>
    <property type="evidence" value="ECO:0007669"/>
    <property type="project" value="TreeGrafter"/>
</dbReference>
<dbReference type="GO" id="GO:0003723">
    <property type="term" value="F:RNA binding"/>
    <property type="evidence" value="ECO:0007669"/>
    <property type="project" value="InterPro"/>
</dbReference>
<dbReference type="GO" id="GO:0160150">
    <property type="term" value="F:tRNA pseudouridine(13) synthase activity"/>
    <property type="evidence" value="ECO:0007669"/>
    <property type="project" value="UniProtKB-EC"/>
</dbReference>
<dbReference type="GO" id="GO:0031119">
    <property type="term" value="P:tRNA pseudouridine synthesis"/>
    <property type="evidence" value="ECO:0007669"/>
    <property type="project" value="UniProtKB-UniRule"/>
</dbReference>
<dbReference type="CDD" id="cd02575">
    <property type="entry name" value="PseudoU_synth_EcTruD"/>
    <property type="match status" value="1"/>
</dbReference>
<dbReference type="FunFam" id="3.30.2340.10:FF:000002">
    <property type="entry name" value="tRNA pseudouridine synthase D"/>
    <property type="match status" value="1"/>
</dbReference>
<dbReference type="FunFam" id="3.30.2350.20:FF:000008">
    <property type="entry name" value="tRNA pseudouridine synthase D"/>
    <property type="match status" value="1"/>
</dbReference>
<dbReference type="Gene3D" id="3.30.2350.20">
    <property type="entry name" value="TruD, catalytic domain"/>
    <property type="match status" value="1"/>
</dbReference>
<dbReference type="HAMAP" id="MF_01082">
    <property type="entry name" value="TruD"/>
    <property type="match status" value="1"/>
</dbReference>
<dbReference type="InterPro" id="IPR020103">
    <property type="entry name" value="PsdUridine_synth_cat_dom_sf"/>
</dbReference>
<dbReference type="InterPro" id="IPR001656">
    <property type="entry name" value="PsdUridine_synth_TruD"/>
</dbReference>
<dbReference type="InterPro" id="IPR020119">
    <property type="entry name" value="PsdUridine_synth_TruD_CS"/>
</dbReference>
<dbReference type="InterPro" id="IPR011760">
    <property type="entry name" value="PsdUridine_synth_TruD_insert"/>
</dbReference>
<dbReference type="InterPro" id="IPR042214">
    <property type="entry name" value="TruD_catalytic"/>
</dbReference>
<dbReference type="InterPro" id="IPR050170">
    <property type="entry name" value="TruD_pseudoU_synthase"/>
</dbReference>
<dbReference type="NCBIfam" id="NF002154">
    <property type="entry name" value="PRK00984.1-3"/>
    <property type="match status" value="1"/>
</dbReference>
<dbReference type="NCBIfam" id="TIGR00094">
    <property type="entry name" value="tRNA_TruD_broad"/>
    <property type="match status" value="1"/>
</dbReference>
<dbReference type="PANTHER" id="PTHR47811">
    <property type="entry name" value="TRNA PSEUDOURIDINE SYNTHASE D"/>
    <property type="match status" value="1"/>
</dbReference>
<dbReference type="PANTHER" id="PTHR47811:SF1">
    <property type="entry name" value="TRNA PSEUDOURIDINE SYNTHASE D"/>
    <property type="match status" value="1"/>
</dbReference>
<dbReference type="Pfam" id="PF01142">
    <property type="entry name" value="TruD"/>
    <property type="match status" value="2"/>
</dbReference>
<dbReference type="SUPFAM" id="SSF55120">
    <property type="entry name" value="Pseudouridine synthase"/>
    <property type="match status" value="1"/>
</dbReference>
<dbReference type="PROSITE" id="PS50984">
    <property type="entry name" value="TRUD"/>
    <property type="match status" value="1"/>
</dbReference>
<dbReference type="PROSITE" id="PS01268">
    <property type="entry name" value="UPF0024"/>
    <property type="match status" value="1"/>
</dbReference>
<gene>
    <name evidence="1" type="primary">truD</name>
    <name type="ordered locus">Cj1457c</name>
</gene>
<sequence>MNLEEENTIFKPLYSLKHSPINAYFSKNSDDFVVRERPLYEFSGKGEHLILHINKKDLTTNEALKILSEASGVKIRDFGYAGLKDKQGSTFQYLSMPKKFESFLSNFSHPKLKILEIFTHENKLRIGHLKGNSFFIRLKKVLPSDALKLEQALMNLDKQGFANYFGYQRFGKFGDNYKEGLEILRGKKMKNVKMKEFLISAFQSELFNRYLSKRVELSHFANDFSEKELIQIYKISKEEAKELKKQEQFFKLLKGEVLGHYPFGKCFLCEDLSAELGRFKARDISAMGLLIGAKAYETGEGLALNLENEIFKDTLEFKAKMQGSRRFMWGYLEELKWRYDEEKAHFCIEFFLQKGSYATVVLEEILHKNLFE</sequence>